<name>NDOC_PSEU8</name>
<proteinExistence type="evidence at protein level"/>
<gene>
    <name evidence="4" type="primary">doxD</name>
</gene>
<keyword id="KW-0002">3D-structure</keyword>
<keyword id="KW-0058">Aromatic hydrocarbons catabolism</keyword>
<keyword id="KW-0223">Dioxygenase</keyword>
<keyword id="KW-0560">Oxidoreductase</keyword>
<keyword id="KW-0614">Plasmid</keyword>
<geneLocation type="plasmid">
    <name>unnamed</name>
</geneLocation>
<feature type="chain" id="PRO_0000085073" description="Naphthalene 1,2-dioxygenase system, small oxygenase component">
    <location>
        <begin position="1"/>
        <end position="194"/>
    </location>
</feature>
<feature type="turn" evidence="8">
    <location>
        <begin position="5"/>
        <end position="7"/>
    </location>
</feature>
<feature type="helix" evidence="8">
    <location>
        <begin position="13"/>
        <end position="23"/>
    </location>
</feature>
<feature type="helix" evidence="8">
    <location>
        <begin position="28"/>
        <end position="46"/>
    </location>
</feature>
<feature type="helix" evidence="8">
    <location>
        <begin position="50"/>
        <end position="57"/>
    </location>
</feature>
<feature type="strand" evidence="8">
    <location>
        <begin position="58"/>
        <end position="69"/>
    </location>
</feature>
<feature type="strand" evidence="8">
    <location>
        <begin position="84"/>
        <end position="90"/>
    </location>
</feature>
<feature type="helix" evidence="8">
    <location>
        <begin position="92"/>
        <end position="103"/>
    </location>
</feature>
<feature type="helix" evidence="8">
    <location>
        <begin position="108"/>
        <end position="110"/>
    </location>
</feature>
<feature type="strand" evidence="8">
    <location>
        <begin position="115"/>
        <end position="127"/>
    </location>
</feature>
<feature type="strand" evidence="8">
    <location>
        <begin position="134"/>
        <end position="147"/>
    </location>
</feature>
<feature type="turn" evidence="8">
    <location>
        <begin position="148"/>
        <end position="150"/>
    </location>
</feature>
<feature type="strand" evidence="8">
    <location>
        <begin position="151"/>
        <end position="165"/>
    </location>
</feature>
<feature type="helix" evidence="8">
    <location>
        <begin position="167"/>
        <end position="169"/>
    </location>
</feature>
<feature type="strand" evidence="8">
    <location>
        <begin position="171"/>
        <end position="179"/>
    </location>
</feature>
<feature type="strand" evidence="8">
    <location>
        <begin position="183"/>
        <end position="185"/>
    </location>
</feature>
<evidence type="ECO:0000250" key="1">
    <source>
        <dbReference type="UniProtKB" id="P0A112"/>
    </source>
</evidence>
<evidence type="ECO:0000269" key="2">
    <source>
    </source>
</evidence>
<evidence type="ECO:0000269" key="3">
    <source>
    </source>
</evidence>
<evidence type="ECO:0000303" key="4">
    <source>
    </source>
</evidence>
<evidence type="ECO:0000305" key="5"/>
<evidence type="ECO:0000305" key="6">
    <source>
    </source>
</evidence>
<evidence type="ECO:0000305" key="7">
    <source ref="3"/>
</evidence>
<evidence type="ECO:0007829" key="8">
    <source>
        <dbReference type="PDB" id="4HM8"/>
    </source>
</evidence>
<protein>
    <recommendedName>
        <fullName evidence="1">Naphthalene 1,2-dioxygenase system, small oxygenase component</fullName>
    </recommendedName>
    <alternativeName>
        <fullName evidence="1">ISP NAP</fullName>
    </alternativeName>
    <alternativeName>
        <fullName evidence="4">Naphthalene 1,2-dioxygenase ISP beta</fullName>
    </alternativeName>
    <alternativeName>
        <fullName evidence="1">Naphthalene 1,2-dioxygenase subunit beta</fullName>
        <shortName evidence="1">ND subunit beta</shortName>
        <shortName evidence="1">NDO subunit beta</shortName>
    </alternativeName>
</protein>
<organism>
    <name type="scientific">Pseudomonas sp. (strain C18)</name>
    <dbReference type="NCBI Taxonomy" id="69011"/>
    <lineage>
        <taxon>Bacteria</taxon>
        <taxon>Pseudomonadati</taxon>
        <taxon>Pseudomonadota</taxon>
    </lineage>
</organism>
<reference key="1">
    <citation type="journal article" date="1993" name="J. Bacteriol.">
        <title>Metabolism of dibenzothiophene and naphthalene in Pseudomonas strains: complete DNA sequence of an upper naphthalene catabolic pathway.</title>
        <authorList>
            <person name="Denome S.A."/>
            <person name="Stanley D.C."/>
            <person name="Olson E.S."/>
            <person name="Young K.D."/>
        </authorList>
    </citation>
    <scope>NUCLEOTIDE SEQUENCE [GENOMIC DNA]</scope>
    <scope>FUNCTION</scope>
    <scope>DISRUPTION PHENOTYPE</scope>
    <scope>PATHWAY</scope>
    <scope>SUBUNIT</scope>
    <source>
        <strain>C18</strain>
        <plasmid>unnamed</plasmid>
    </source>
</reference>
<reference key="2">
    <citation type="journal article" date="2006" name="J. Bacteriol.">
        <title>Structural basis for regioselectivity and stereoselectivity of product formation by naphthalene 1,2-dioxygenase.</title>
        <authorList>
            <person name="Ferraro D.J."/>
            <person name="Okerlund A.L."/>
            <person name="Mowers J.C."/>
            <person name="Ramaswamy S."/>
        </authorList>
    </citation>
    <scope>X-RAY CRYSTALLOGRAPHY (1.50 ANGSTROMS)</scope>
    <scope>SUBUNIT</scope>
</reference>
<reference key="3">
    <citation type="submission" date="2012-10" db="PDB data bank">
        <title>Naphthalene 1,2-Dioxygenase bound to thioanisole.</title>
        <authorList>
            <person name="Ferraro D.J."/>
            <person name="Ramaswamy S."/>
        </authorList>
    </citation>
    <scope>X-RAY CRYSTALLOGRAPHY (1.30 ANGSTROMS)</scope>
    <scope>SUBUNIT</scope>
</reference>
<accession>P0A113</accession>
<accession>P23095</accession>
<accession>Q52125</accession>
<comment type="function">
    <text evidence="3">Component of the naphthalene dioxygenase (NDO) multicomponent enzyme system which catalyzes the incorporation of both atoms of molecular oxygen into naphthalene to form cis-(1R,2S)-dihydroxy-1,2-dihydronaphthalene. The beta subunit seems to have a structural role in the holoenzyme.</text>
</comment>
<comment type="pathway">
    <text evidence="6">Aromatic compound metabolism; naphthalene degradation.</text>
</comment>
<comment type="subunit">
    <text evidence="2 6 7">The naphthalene dioxygenase (NDO) multicomponent enzyme system is composed of an electron transfer component and a dioxygenase component (iron sulfur protein (ISP)). The electron transfer component is composed of a ferredoxin reductase and a ferredoxin (DoxA), and the dioxygenase component is formed of a heterohexamer (trimer of heterodimers) of three large alpha subunits (DoxB) and three small beta subunits (DoxD).</text>
</comment>
<comment type="disruption phenotype">
    <text evidence="3">Cells lacking this gene are unable to degrade naphthalene.</text>
</comment>
<comment type="miscellaneous">
    <text evidence="6">Encoded on an unnamed 75 kb plasmid.</text>
</comment>
<comment type="similarity">
    <text evidence="5">Belongs to the bacterial ring-hydroxylating dioxygenase beta subunit family.</text>
</comment>
<sequence>MMINIQEDKLVSAHDAEEILRFFNCHDSALQQEATTLLTQEAHLLDIQAYRAWLEHCVGSEVQYQVISRELRAASERRYKLNEAMNVYNENFQQLKVRVEHQLDPQNWGNSPKLRFTRFITNVQAAMDVNDKELLHIRSNVILHRARRGNQVDVFYAAREDKWKRGEGGVRKLVQRFVDYPERILQTHNLMVFL</sequence>
<dbReference type="EMBL" id="M60405">
    <property type="protein sequence ID" value="AAA16127.1"/>
    <property type="molecule type" value="Genomic_DNA"/>
</dbReference>
<dbReference type="PIR" id="S27634">
    <property type="entry name" value="S27634"/>
</dbReference>
<dbReference type="PDB" id="2HMJ">
    <property type="method" value="X-ray"/>
    <property type="resolution" value="1.50 A"/>
    <property type="chains" value="B=1-194"/>
</dbReference>
<dbReference type="PDB" id="2HMK">
    <property type="method" value="X-ray"/>
    <property type="resolution" value="1.65 A"/>
    <property type="chains" value="B=1-194"/>
</dbReference>
<dbReference type="PDB" id="2HML">
    <property type="method" value="X-ray"/>
    <property type="resolution" value="1.80 A"/>
    <property type="chains" value="B=1-194"/>
</dbReference>
<dbReference type="PDB" id="2HMM">
    <property type="method" value="X-ray"/>
    <property type="resolution" value="1.60 A"/>
    <property type="chains" value="B=1-194"/>
</dbReference>
<dbReference type="PDB" id="2HMN">
    <property type="method" value="X-ray"/>
    <property type="resolution" value="1.70 A"/>
    <property type="chains" value="B=1-194"/>
</dbReference>
<dbReference type="PDB" id="2HMO">
    <property type="method" value="X-ray"/>
    <property type="resolution" value="1.60 A"/>
    <property type="chains" value="B=1-194"/>
</dbReference>
<dbReference type="PDB" id="4HJL">
    <property type="method" value="X-ray"/>
    <property type="resolution" value="1.50 A"/>
    <property type="chains" value="B=3-194"/>
</dbReference>
<dbReference type="PDB" id="4HKV">
    <property type="method" value="X-ray"/>
    <property type="resolution" value="1.65 A"/>
    <property type="chains" value="B=1-194"/>
</dbReference>
<dbReference type="PDB" id="4HM0">
    <property type="method" value="X-ray"/>
    <property type="resolution" value="1.80 A"/>
    <property type="chains" value="B=1-194"/>
</dbReference>
<dbReference type="PDB" id="4HM1">
    <property type="method" value="X-ray"/>
    <property type="resolution" value="1.50 A"/>
    <property type="chains" value="B=1-194"/>
</dbReference>
<dbReference type="PDB" id="4HM2">
    <property type="method" value="X-ray"/>
    <property type="resolution" value="1.60 A"/>
    <property type="chains" value="B=1-194"/>
</dbReference>
<dbReference type="PDB" id="4HM3">
    <property type="method" value="X-ray"/>
    <property type="resolution" value="1.50 A"/>
    <property type="chains" value="B=1-194"/>
</dbReference>
<dbReference type="PDB" id="4HM4">
    <property type="method" value="X-ray"/>
    <property type="resolution" value="1.50 A"/>
    <property type="chains" value="B=1-194"/>
</dbReference>
<dbReference type="PDB" id="4HM5">
    <property type="method" value="X-ray"/>
    <property type="resolution" value="1.50 A"/>
    <property type="chains" value="B=1-194"/>
</dbReference>
<dbReference type="PDB" id="4HM6">
    <property type="method" value="X-ray"/>
    <property type="resolution" value="1.50 A"/>
    <property type="chains" value="B=1-194"/>
</dbReference>
<dbReference type="PDB" id="4HM7">
    <property type="method" value="X-ray"/>
    <property type="resolution" value="1.50 A"/>
    <property type="chains" value="B=1-194"/>
</dbReference>
<dbReference type="PDB" id="4HM8">
    <property type="method" value="X-ray"/>
    <property type="resolution" value="1.30 A"/>
    <property type="chains" value="B=1-194"/>
</dbReference>
<dbReference type="PDBsum" id="2HMJ"/>
<dbReference type="PDBsum" id="2HMK"/>
<dbReference type="PDBsum" id="2HML"/>
<dbReference type="PDBsum" id="2HMM"/>
<dbReference type="PDBsum" id="2HMN"/>
<dbReference type="PDBsum" id="2HMO"/>
<dbReference type="PDBsum" id="4HJL"/>
<dbReference type="PDBsum" id="4HKV"/>
<dbReference type="PDBsum" id="4HM0"/>
<dbReference type="PDBsum" id="4HM1"/>
<dbReference type="PDBsum" id="4HM2"/>
<dbReference type="PDBsum" id="4HM3"/>
<dbReference type="PDBsum" id="4HM4"/>
<dbReference type="PDBsum" id="4HM5"/>
<dbReference type="PDBsum" id="4HM6"/>
<dbReference type="PDBsum" id="4HM7"/>
<dbReference type="PDBsum" id="4HM8"/>
<dbReference type="SMR" id="P0A113"/>
<dbReference type="UniPathway" id="UPA00082"/>
<dbReference type="EvolutionaryTrace" id="P0A113"/>
<dbReference type="GO" id="GO:0051213">
    <property type="term" value="F:dioxygenase activity"/>
    <property type="evidence" value="ECO:0007669"/>
    <property type="project" value="UniProtKB-KW"/>
</dbReference>
<dbReference type="GO" id="GO:0019380">
    <property type="term" value="P:3-phenylpropionate catabolic process"/>
    <property type="evidence" value="ECO:0007669"/>
    <property type="project" value="TreeGrafter"/>
</dbReference>
<dbReference type="CDD" id="cd00667">
    <property type="entry name" value="ring_hydroxylating_dioxygenases_beta"/>
    <property type="match status" value="1"/>
</dbReference>
<dbReference type="Gene3D" id="3.10.450.50">
    <property type="match status" value="1"/>
</dbReference>
<dbReference type="InterPro" id="IPR032710">
    <property type="entry name" value="NTF2-like_dom_sf"/>
</dbReference>
<dbReference type="InterPro" id="IPR000391">
    <property type="entry name" value="Rng_hydr_dOase-bsu"/>
</dbReference>
<dbReference type="PANTHER" id="PTHR41534:SF2">
    <property type="entry name" value="3-PHENYLPROPIONATE_CINNAMIC ACID DIOXYGENASE SUBUNIT BETA"/>
    <property type="match status" value="1"/>
</dbReference>
<dbReference type="PANTHER" id="PTHR41534">
    <property type="entry name" value="BLR3401 PROTEIN"/>
    <property type="match status" value="1"/>
</dbReference>
<dbReference type="Pfam" id="PF00866">
    <property type="entry name" value="Ring_hydroxyl_B"/>
    <property type="match status" value="1"/>
</dbReference>
<dbReference type="SUPFAM" id="SSF54427">
    <property type="entry name" value="NTF2-like"/>
    <property type="match status" value="1"/>
</dbReference>